<protein>
    <recommendedName>
        <fullName>Ribonuclease HI</fullName>
        <shortName>RNase HI</shortName>
        <ecNumber>3.1.26.4</ecNumber>
    </recommendedName>
    <alternativeName>
        <fullName>Ribonuclease H</fullName>
        <shortName>RNase H</shortName>
    </alternativeName>
</protein>
<sequence>MLKQVEIFTDGSCLGNPGPGGYGAILRYRGHEKTFSEGYTLTTNNRMELMAAIVALEALKEHCEVTLSTDSQYVRQGITQWIHNWKKRGWKTAEKKPVKNVDLWKRLDAALGQHQIKWVWVKGHAGHPENERCDELARAAAMNPTQEDSGYQAEA</sequence>
<organism>
    <name type="scientific">Salmonella typhimurium (strain LT2 / SGSC1412 / ATCC 700720)</name>
    <dbReference type="NCBI Taxonomy" id="99287"/>
    <lineage>
        <taxon>Bacteria</taxon>
        <taxon>Pseudomonadati</taxon>
        <taxon>Pseudomonadota</taxon>
        <taxon>Gammaproteobacteria</taxon>
        <taxon>Enterobacterales</taxon>
        <taxon>Enterobacteriaceae</taxon>
        <taxon>Salmonella</taxon>
    </lineage>
</organism>
<name>RNH_SALTY</name>
<keyword id="KW-0963">Cytoplasm</keyword>
<keyword id="KW-0255">Endonuclease</keyword>
<keyword id="KW-0378">Hydrolase</keyword>
<keyword id="KW-0460">Magnesium</keyword>
<keyword id="KW-0479">Metal-binding</keyword>
<keyword id="KW-0540">Nuclease</keyword>
<keyword id="KW-1185">Reference proteome</keyword>
<feature type="chain" id="PRO_0000195402" description="Ribonuclease HI">
    <location>
        <begin position="1"/>
        <end position="155"/>
    </location>
</feature>
<feature type="domain" description="RNase H type-1" evidence="2">
    <location>
        <begin position="1"/>
        <end position="142"/>
    </location>
</feature>
<feature type="binding site" evidence="1">
    <location>
        <position position="10"/>
    </location>
    <ligand>
        <name>Mg(2+)</name>
        <dbReference type="ChEBI" id="CHEBI:18420"/>
        <label>1</label>
    </ligand>
</feature>
<feature type="binding site" evidence="1">
    <location>
        <position position="10"/>
    </location>
    <ligand>
        <name>Mg(2+)</name>
        <dbReference type="ChEBI" id="CHEBI:18420"/>
        <label>2</label>
    </ligand>
</feature>
<feature type="binding site" evidence="1">
    <location>
        <position position="48"/>
    </location>
    <ligand>
        <name>Mg(2+)</name>
        <dbReference type="ChEBI" id="CHEBI:18420"/>
        <label>1</label>
    </ligand>
</feature>
<feature type="binding site" evidence="1">
    <location>
        <position position="70"/>
    </location>
    <ligand>
        <name>Mg(2+)</name>
        <dbReference type="ChEBI" id="CHEBI:18420"/>
        <label>1</label>
    </ligand>
</feature>
<feature type="binding site" evidence="1">
    <location>
        <position position="134"/>
    </location>
    <ligand>
        <name>Mg(2+)</name>
        <dbReference type="ChEBI" id="CHEBI:18420"/>
        <label>2</label>
    </ligand>
</feature>
<reference key="1">
    <citation type="journal article" date="1991" name="Mol. Gen. Genet.">
        <title>Selective cloning of genes encoding RNase H from Salmonella typhimurium, Saccharomyces cerevisiae and Escherichia coli rnh mutant.</title>
        <authorList>
            <person name="Itaya M."/>
            <person name="McKelvin D."/>
            <person name="Chatterjie S.K."/>
            <person name="Crouch R.J."/>
        </authorList>
    </citation>
    <scope>NUCLEOTIDE SEQUENCE [GENOMIC DNA]</scope>
    <source>
        <strain>LT2</strain>
    </source>
</reference>
<reference key="2">
    <citation type="journal article" date="2001" name="Nature">
        <title>Complete genome sequence of Salmonella enterica serovar Typhimurium LT2.</title>
        <authorList>
            <person name="McClelland M."/>
            <person name="Sanderson K.E."/>
            <person name="Spieth J."/>
            <person name="Clifton S.W."/>
            <person name="Latreille P."/>
            <person name="Courtney L."/>
            <person name="Porwollik S."/>
            <person name="Ali J."/>
            <person name="Dante M."/>
            <person name="Du F."/>
            <person name="Hou S."/>
            <person name="Layman D."/>
            <person name="Leonard S."/>
            <person name="Nguyen C."/>
            <person name="Scott K."/>
            <person name="Holmes A."/>
            <person name="Grewal N."/>
            <person name="Mulvaney E."/>
            <person name="Ryan E."/>
            <person name="Sun H."/>
            <person name="Florea L."/>
            <person name="Miller W."/>
            <person name="Stoneking T."/>
            <person name="Nhan M."/>
            <person name="Waterston R."/>
            <person name="Wilson R.K."/>
        </authorList>
    </citation>
    <scope>NUCLEOTIDE SEQUENCE [LARGE SCALE GENOMIC DNA]</scope>
    <source>
        <strain>LT2 / SGSC1412 / ATCC 700720</strain>
    </source>
</reference>
<comment type="function">
    <text evidence="1">Endonuclease that specifically degrades the RNA of RNA-DNA hybrids.</text>
</comment>
<comment type="catalytic activity">
    <reaction>
        <text>Endonucleolytic cleavage to 5'-phosphomonoester.</text>
        <dbReference type="EC" id="3.1.26.4"/>
    </reaction>
</comment>
<comment type="cofactor">
    <cofactor evidence="1">
        <name>Mg(2+)</name>
        <dbReference type="ChEBI" id="CHEBI:18420"/>
    </cofactor>
    <text evidence="1">Binds 1 Mg(2+) ion per subunit. May bind a second metal ion at a regulatory site, or after substrate binding.</text>
</comment>
<comment type="subunit">
    <text>Monomer.</text>
</comment>
<comment type="subcellular location">
    <subcellularLocation>
        <location evidence="3">Cytoplasm</location>
    </subcellularLocation>
</comment>
<comment type="similarity">
    <text evidence="3">Belongs to the RNase H family.</text>
</comment>
<proteinExistence type="inferred from homology"/>
<dbReference type="EC" id="3.1.26.4"/>
<dbReference type="EMBL" id="X57159">
    <property type="protein sequence ID" value="CAA40447.1"/>
    <property type="molecule type" value="Genomic_DNA"/>
</dbReference>
<dbReference type="EMBL" id="AE006468">
    <property type="protein sequence ID" value="AAL19220.1"/>
    <property type="molecule type" value="Genomic_DNA"/>
</dbReference>
<dbReference type="PIR" id="S21659">
    <property type="entry name" value="S21659"/>
</dbReference>
<dbReference type="RefSeq" id="NP_459261.1">
    <property type="nucleotide sequence ID" value="NC_003197.2"/>
</dbReference>
<dbReference type="RefSeq" id="WP_000917872.1">
    <property type="nucleotide sequence ID" value="NC_003197.2"/>
</dbReference>
<dbReference type="SMR" id="P0A2B9"/>
<dbReference type="STRING" id="99287.STM0263"/>
<dbReference type="PaxDb" id="99287-STM0263"/>
<dbReference type="GeneID" id="1251781"/>
<dbReference type="KEGG" id="stm:STM0263"/>
<dbReference type="PATRIC" id="fig|99287.12.peg.272"/>
<dbReference type="HOGENOM" id="CLU_030894_6_0_6"/>
<dbReference type="OMA" id="MQEIEIF"/>
<dbReference type="PhylomeDB" id="P0A2B9"/>
<dbReference type="BioCyc" id="SENT99287:STM0263-MONOMER"/>
<dbReference type="Proteomes" id="UP000001014">
    <property type="component" value="Chromosome"/>
</dbReference>
<dbReference type="GO" id="GO:0005737">
    <property type="term" value="C:cytoplasm"/>
    <property type="evidence" value="ECO:0007669"/>
    <property type="project" value="UniProtKB-SubCell"/>
</dbReference>
<dbReference type="GO" id="GO:0000287">
    <property type="term" value="F:magnesium ion binding"/>
    <property type="evidence" value="ECO:0007669"/>
    <property type="project" value="UniProtKB-UniRule"/>
</dbReference>
<dbReference type="GO" id="GO:0003676">
    <property type="term" value="F:nucleic acid binding"/>
    <property type="evidence" value="ECO:0007669"/>
    <property type="project" value="InterPro"/>
</dbReference>
<dbReference type="GO" id="GO:0004523">
    <property type="term" value="F:RNA-DNA hybrid ribonuclease activity"/>
    <property type="evidence" value="ECO:0000318"/>
    <property type="project" value="GO_Central"/>
</dbReference>
<dbReference type="GO" id="GO:0043137">
    <property type="term" value="P:DNA replication, removal of RNA primer"/>
    <property type="evidence" value="ECO:0000318"/>
    <property type="project" value="GO_Central"/>
</dbReference>
<dbReference type="CDD" id="cd09278">
    <property type="entry name" value="RNase_HI_prokaryote_like"/>
    <property type="match status" value="1"/>
</dbReference>
<dbReference type="FunFam" id="3.30.420.10:FF:000008">
    <property type="entry name" value="Ribonuclease H"/>
    <property type="match status" value="1"/>
</dbReference>
<dbReference type="Gene3D" id="3.30.420.10">
    <property type="entry name" value="Ribonuclease H-like superfamily/Ribonuclease H"/>
    <property type="match status" value="1"/>
</dbReference>
<dbReference type="HAMAP" id="MF_00042">
    <property type="entry name" value="RNase_H"/>
    <property type="match status" value="1"/>
</dbReference>
<dbReference type="InterPro" id="IPR050092">
    <property type="entry name" value="RNase_H"/>
</dbReference>
<dbReference type="InterPro" id="IPR012337">
    <property type="entry name" value="RNaseH-like_sf"/>
</dbReference>
<dbReference type="InterPro" id="IPR002156">
    <property type="entry name" value="RNaseH_domain"/>
</dbReference>
<dbReference type="InterPro" id="IPR036397">
    <property type="entry name" value="RNaseH_sf"/>
</dbReference>
<dbReference type="InterPro" id="IPR022892">
    <property type="entry name" value="RNaseHI"/>
</dbReference>
<dbReference type="NCBIfam" id="NF001236">
    <property type="entry name" value="PRK00203.1"/>
    <property type="match status" value="1"/>
</dbReference>
<dbReference type="PANTHER" id="PTHR10642">
    <property type="entry name" value="RIBONUCLEASE H1"/>
    <property type="match status" value="1"/>
</dbReference>
<dbReference type="PANTHER" id="PTHR10642:SF26">
    <property type="entry name" value="RIBONUCLEASE H1"/>
    <property type="match status" value="1"/>
</dbReference>
<dbReference type="Pfam" id="PF00075">
    <property type="entry name" value="RNase_H"/>
    <property type="match status" value="1"/>
</dbReference>
<dbReference type="SUPFAM" id="SSF53098">
    <property type="entry name" value="Ribonuclease H-like"/>
    <property type="match status" value="1"/>
</dbReference>
<dbReference type="PROSITE" id="PS50879">
    <property type="entry name" value="RNASE_H_1"/>
    <property type="match status" value="1"/>
</dbReference>
<evidence type="ECO:0000250" key="1"/>
<evidence type="ECO:0000255" key="2">
    <source>
        <dbReference type="PROSITE-ProRule" id="PRU00408"/>
    </source>
</evidence>
<evidence type="ECO:0000305" key="3"/>
<gene>
    <name type="primary">rnhA</name>
    <name type="synonym">rnh</name>
    <name type="ordered locus">STM0263</name>
</gene>
<accession>P0A2B9</accession>
<accession>P23329</accession>